<comment type="function">
    <text evidence="1">Non-catalytic subunit of AMP-activated protein kinase (AMPK), an energy sensor protein kinase that plays a key role in regulating cellular energy metabolism. In response to reduction of intracellular ATP levels, AMPK activates energy-producing pathways and inhibits energy-consuming processes: inhibits protein, carbohydrate and lipid biosynthesis, as well as cell growth and proliferation. AMPK acts via direct phosphorylation of metabolic enzymes, and by longer-term effects via phosphorylation of transcription regulators. Also acts as a regulator of cellular polarity by remodeling the actin cytoskeleton; probably by indirectly activating myosin. Beta non-catalytic subunit acts as a scaffold on which the AMPK complex assembles, via its C-terminus that bridges alpha (PRKAA1 or PRKAA2) and gamma subunits (PRKAG1, PRKAG2 or PRKAG3) (By similarity).</text>
</comment>
<comment type="subunit">
    <text evidence="1">AMPK is a heterotrimer of an alpha catalytic subunit (PRKAA1 or PRKAA2), a beta (PRKAB1 or PRKAB2) and a gamma non-catalytic subunits (PRKAG1, PRKAG2 or PRKAG3). Interacts with FNIP1 and FNIP2 (By similarity).</text>
</comment>
<comment type="domain">
    <text evidence="1">The glycogen-binding domain may target AMPK to glycogen so that other factors like glycogen-bound debranching enzyme or protein phosphatases can directly affect AMPK activity.</text>
</comment>
<comment type="PTM">
    <text evidence="1">Phosphorylated when associated with the catalytic subunit (PRKAA1 or PRKAA2). Phosphorylated by ULK1; leading to negatively regulate AMPK activity and suggesting the existence of a regulatory feedback loop between ULK1 and AMPK (By similarity).</text>
</comment>
<comment type="similarity">
    <text evidence="6">Belongs to the 5'-AMP-activated protein kinase beta subunit family.</text>
</comment>
<gene>
    <name type="primary">PRKAB1</name>
</gene>
<feature type="initiator methionine" description="Removed" evidence="4">
    <location>
        <position position="1"/>
    </location>
</feature>
<feature type="chain" id="PRO_0000239699" description="5'-AMP-activated protein kinase subunit beta-1">
    <location>
        <begin position="2"/>
        <end position="270"/>
    </location>
</feature>
<feature type="region of interest" description="Disordered" evidence="5">
    <location>
        <begin position="1"/>
        <end position="44"/>
    </location>
</feature>
<feature type="region of interest" description="Glycogen-binding domain" evidence="1">
    <location>
        <begin position="68"/>
        <end position="163"/>
    </location>
</feature>
<feature type="compositionally biased region" description="Basic and acidic residues" evidence="5">
    <location>
        <begin position="9"/>
        <end position="36"/>
    </location>
</feature>
<feature type="modified residue" description="Phosphothreonine" evidence="4">
    <location>
        <position position="4"/>
    </location>
</feature>
<feature type="modified residue" description="Phosphoserine" evidence="4">
    <location>
        <position position="5"/>
    </location>
</feature>
<feature type="modified residue" description="Phosphoserine" evidence="4">
    <location>
        <position position="6"/>
    </location>
</feature>
<feature type="modified residue" description="Phosphothreonine" evidence="4">
    <location>
        <position position="19"/>
    </location>
</feature>
<feature type="modified residue" description="Phosphoserine; by autocatalysis" evidence="2">
    <location>
        <position position="24"/>
    </location>
</feature>
<feature type="modified residue" description="Phosphoserine; by autocatalysis" evidence="2">
    <location>
        <position position="25"/>
    </location>
</feature>
<feature type="modified residue" description="Phosphoserine" evidence="4">
    <location>
        <position position="40"/>
    </location>
</feature>
<feature type="modified residue" description="Phosphoserine" evidence="4">
    <location>
        <position position="96"/>
    </location>
</feature>
<feature type="modified residue" description="Phosphoserine" evidence="2">
    <location>
        <position position="101"/>
    </location>
</feature>
<feature type="modified residue" description="Phosphoserine; by autocatalysis" evidence="3">
    <location>
        <position position="108"/>
    </location>
</feature>
<feature type="modified residue" description="Phosphothreonine" evidence="4">
    <location>
        <position position="148"/>
    </location>
</feature>
<feature type="modified residue" description="Phosphoserine" evidence="3">
    <location>
        <position position="182"/>
    </location>
</feature>
<feature type="modified residue" description="N6-succinyllysine" evidence="3">
    <location>
        <position position="201"/>
    </location>
</feature>
<feature type="lipid moiety-binding region" description="N-myristoyl glycine" evidence="1">
    <location>
        <position position="2"/>
    </location>
</feature>
<reference key="1">
    <citation type="journal article" date="2005" name="BMC Genomics">
        <title>Characterization of 954 bovine full-CDS cDNA sequences.</title>
        <authorList>
            <person name="Harhay G.P."/>
            <person name="Sonstegard T.S."/>
            <person name="Keele J.W."/>
            <person name="Heaton M.P."/>
            <person name="Clawson M.L."/>
            <person name="Snelling W.M."/>
            <person name="Wiedmann R.T."/>
            <person name="Van Tassell C.P."/>
            <person name="Smith T.P.L."/>
        </authorList>
    </citation>
    <scope>NUCLEOTIDE SEQUENCE [LARGE SCALE MRNA]</scope>
</reference>
<reference key="2">
    <citation type="submission" date="2007-07" db="EMBL/GenBank/DDBJ databases">
        <authorList>
            <consortium name="NIH - Mammalian Gene Collection (MGC) project"/>
        </authorList>
    </citation>
    <scope>NUCLEOTIDE SEQUENCE [LARGE SCALE MRNA]</scope>
    <source>
        <strain>Hereford</strain>
        <tissue>Thymus</tissue>
    </source>
</reference>
<evidence type="ECO:0000250" key="1"/>
<evidence type="ECO:0000250" key="2">
    <source>
        <dbReference type="UniProtKB" id="P80386"/>
    </source>
</evidence>
<evidence type="ECO:0000250" key="3">
    <source>
        <dbReference type="UniProtKB" id="Q9R078"/>
    </source>
</evidence>
<evidence type="ECO:0000250" key="4">
    <source>
        <dbReference type="UniProtKB" id="Q9Y478"/>
    </source>
</evidence>
<evidence type="ECO:0000256" key="5">
    <source>
        <dbReference type="SAM" id="MobiDB-lite"/>
    </source>
</evidence>
<evidence type="ECO:0000305" key="6"/>
<accession>Q5BIS9</accession>
<accession>A6QQW7</accession>
<protein>
    <recommendedName>
        <fullName>5'-AMP-activated protein kinase subunit beta-1</fullName>
        <shortName>AMPK subunit beta-1</shortName>
        <shortName>AMPKb</shortName>
    </recommendedName>
</protein>
<sequence>MGNTSSERAALDRQGGHKTPRRDSSGGSKDGDRPKILMDSPEDADLFHSEEIKAPEKEEFLAWQHDLEVNDKAPAQARPTVFRWTGGGKEVYLSGSFNNWSKLPLTRSHNNFVAILDLPEGEHQYKFFVDGQWTHDPSEPVVTSQLGTVNNVIQVKKTDFEVFDALMVDSQKCSDVSELSSSPPGPYHQEPYISKPEERFKAPPILPPHLLQVILNKDTGISCDPALLPEPNHVMLNHLYALSIKDGVMVLSATHRYKKKYVTTLLYKPI</sequence>
<keyword id="KW-0275">Fatty acid biosynthesis</keyword>
<keyword id="KW-0276">Fatty acid metabolism</keyword>
<keyword id="KW-0444">Lipid biosynthesis</keyword>
<keyword id="KW-0443">Lipid metabolism</keyword>
<keyword id="KW-0449">Lipoprotein</keyword>
<keyword id="KW-0519">Myristate</keyword>
<keyword id="KW-0597">Phosphoprotein</keyword>
<keyword id="KW-1185">Reference proteome</keyword>
<name>AAKB1_BOVIN</name>
<dbReference type="EMBL" id="BT021145">
    <property type="protein sequence ID" value="AAX31327.1"/>
    <property type="molecule type" value="mRNA"/>
</dbReference>
<dbReference type="EMBL" id="BC150021">
    <property type="protein sequence ID" value="AAI50022.1"/>
    <property type="molecule type" value="mRNA"/>
</dbReference>
<dbReference type="RefSeq" id="NP_001019729.1">
    <property type="nucleotide sequence ID" value="NM_001024558.1"/>
</dbReference>
<dbReference type="RefSeq" id="XP_005217938.1">
    <property type="nucleotide sequence ID" value="XM_005217881.5"/>
</dbReference>
<dbReference type="RefSeq" id="XP_059732059.1">
    <property type="nucleotide sequence ID" value="XM_059876076.1"/>
</dbReference>
<dbReference type="SMR" id="Q5BIS9"/>
<dbReference type="FunCoup" id="Q5BIS9">
    <property type="interactions" value="2997"/>
</dbReference>
<dbReference type="STRING" id="9913.ENSBTAP00000007798"/>
<dbReference type="CAZy" id="CBM48">
    <property type="family name" value="Carbohydrate-Binding Module Family 48"/>
</dbReference>
<dbReference type="PaxDb" id="9913-ENSBTAP00000007798"/>
<dbReference type="Ensembl" id="ENSBTAT00000007798.5">
    <property type="protein sequence ID" value="ENSBTAP00000007798.3"/>
    <property type="gene ID" value="ENSBTAG00000005940.5"/>
</dbReference>
<dbReference type="GeneID" id="534107"/>
<dbReference type="KEGG" id="bta:534107"/>
<dbReference type="CTD" id="5564"/>
<dbReference type="VEuPathDB" id="HostDB:ENSBTAG00000005940"/>
<dbReference type="VGNC" id="VGNC:33319">
    <property type="gene designation" value="PRKAB1"/>
</dbReference>
<dbReference type="eggNOG" id="KOG1616">
    <property type="taxonomic scope" value="Eukaryota"/>
</dbReference>
<dbReference type="GeneTree" id="ENSGT00940000155307"/>
<dbReference type="HOGENOM" id="CLU_070949_2_0_1"/>
<dbReference type="InParanoid" id="Q5BIS9"/>
<dbReference type="OMA" id="QRTINAP"/>
<dbReference type="OrthoDB" id="531008at2759"/>
<dbReference type="TreeFam" id="TF313827"/>
<dbReference type="Reactome" id="R-BTA-1632852">
    <property type="pathway name" value="Macroautophagy"/>
</dbReference>
<dbReference type="Reactome" id="R-BTA-380972">
    <property type="pathway name" value="Energy dependent regulation of mTOR by LKB1-AMPK"/>
</dbReference>
<dbReference type="Reactome" id="R-BTA-5628897">
    <property type="pathway name" value="TP53 Regulates Metabolic Genes"/>
</dbReference>
<dbReference type="Reactome" id="R-BTA-6804756">
    <property type="pathway name" value="Regulation of TP53 Activity through Phosphorylation"/>
</dbReference>
<dbReference type="Proteomes" id="UP000009136">
    <property type="component" value="Chromosome 17"/>
</dbReference>
<dbReference type="Bgee" id="ENSBTAG00000005940">
    <property type="expression patterns" value="Expressed in prostate gland and 107 other cell types or tissues"/>
</dbReference>
<dbReference type="GO" id="GO:0005737">
    <property type="term" value="C:cytoplasm"/>
    <property type="evidence" value="ECO:0000318"/>
    <property type="project" value="GO_Central"/>
</dbReference>
<dbReference type="GO" id="GO:0031588">
    <property type="term" value="C:nucleotide-activated protein kinase complex"/>
    <property type="evidence" value="ECO:0000318"/>
    <property type="project" value="GO_Central"/>
</dbReference>
<dbReference type="GO" id="GO:0005634">
    <property type="term" value="C:nucleus"/>
    <property type="evidence" value="ECO:0000318"/>
    <property type="project" value="GO_Central"/>
</dbReference>
<dbReference type="GO" id="GO:0019901">
    <property type="term" value="F:protein kinase binding"/>
    <property type="evidence" value="ECO:0000318"/>
    <property type="project" value="GO_Central"/>
</dbReference>
<dbReference type="GO" id="GO:0006633">
    <property type="term" value="P:fatty acid biosynthetic process"/>
    <property type="evidence" value="ECO:0007669"/>
    <property type="project" value="UniProtKB-KW"/>
</dbReference>
<dbReference type="GO" id="GO:0007165">
    <property type="term" value="P:signal transduction"/>
    <property type="evidence" value="ECO:0000318"/>
    <property type="project" value="GO_Central"/>
</dbReference>
<dbReference type="CDD" id="cd02859">
    <property type="entry name" value="E_set_AMPKbeta_like_N"/>
    <property type="match status" value="1"/>
</dbReference>
<dbReference type="FunFam" id="2.60.40.10:FF:000139">
    <property type="entry name" value="Protein kinase AMP-activated non-catalytic subunit beta 1"/>
    <property type="match status" value="1"/>
</dbReference>
<dbReference type="Gene3D" id="6.20.250.60">
    <property type="match status" value="1"/>
</dbReference>
<dbReference type="Gene3D" id="2.60.40.10">
    <property type="entry name" value="Immunoglobulins"/>
    <property type="match status" value="1"/>
</dbReference>
<dbReference type="InterPro" id="IPR032640">
    <property type="entry name" value="AMPK1_CBM"/>
</dbReference>
<dbReference type="InterPro" id="IPR006828">
    <property type="entry name" value="ASC_dom"/>
</dbReference>
<dbReference type="InterPro" id="IPR037256">
    <property type="entry name" value="ASC_dom_sf"/>
</dbReference>
<dbReference type="InterPro" id="IPR050827">
    <property type="entry name" value="CRP1_MDG1_kinase"/>
</dbReference>
<dbReference type="InterPro" id="IPR013783">
    <property type="entry name" value="Ig-like_fold"/>
</dbReference>
<dbReference type="InterPro" id="IPR014756">
    <property type="entry name" value="Ig_E-set"/>
</dbReference>
<dbReference type="PANTHER" id="PTHR10343">
    <property type="entry name" value="5'-AMP-ACTIVATED PROTEIN KINASE , BETA SUBUNIT"/>
    <property type="match status" value="1"/>
</dbReference>
<dbReference type="PANTHER" id="PTHR10343:SF84">
    <property type="entry name" value="5'-AMP-ACTIVATED PROTEIN KINASE SUBUNIT BETA-1"/>
    <property type="match status" value="1"/>
</dbReference>
<dbReference type="Pfam" id="PF16561">
    <property type="entry name" value="AMPK1_CBM"/>
    <property type="match status" value="1"/>
</dbReference>
<dbReference type="Pfam" id="PF04739">
    <property type="entry name" value="AMPKBI"/>
    <property type="match status" value="1"/>
</dbReference>
<dbReference type="SMART" id="SM01010">
    <property type="entry name" value="AMPKBI"/>
    <property type="match status" value="1"/>
</dbReference>
<dbReference type="SUPFAM" id="SSF160219">
    <property type="entry name" value="AMPKBI-like"/>
    <property type="match status" value="1"/>
</dbReference>
<dbReference type="SUPFAM" id="SSF81296">
    <property type="entry name" value="E set domains"/>
    <property type="match status" value="1"/>
</dbReference>
<proteinExistence type="evidence at transcript level"/>
<organism>
    <name type="scientific">Bos taurus</name>
    <name type="common">Bovine</name>
    <dbReference type="NCBI Taxonomy" id="9913"/>
    <lineage>
        <taxon>Eukaryota</taxon>
        <taxon>Metazoa</taxon>
        <taxon>Chordata</taxon>
        <taxon>Craniata</taxon>
        <taxon>Vertebrata</taxon>
        <taxon>Euteleostomi</taxon>
        <taxon>Mammalia</taxon>
        <taxon>Eutheria</taxon>
        <taxon>Laurasiatheria</taxon>
        <taxon>Artiodactyla</taxon>
        <taxon>Ruminantia</taxon>
        <taxon>Pecora</taxon>
        <taxon>Bovidae</taxon>
        <taxon>Bovinae</taxon>
        <taxon>Bos</taxon>
    </lineage>
</organism>